<name>RL20_MESH7</name>
<comment type="function">
    <text evidence="1">Binds directly to 23S ribosomal RNA and is necessary for the in vitro assembly process of the 50S ribosomal subunit. It is not involved in the protein synthesizing functions of that subunit.</text>
</comment>
<comment type="similarity">
    <text evidence="1">Belongs to the bacterial ribosomal protein bL20 family.</text>
</comment>
<proteinExistence type="inferred from homology"/>
<feature type="chain" id="PRO_0000243701" description="Large ribosomal subunit protein bL20">
    <location>
        <begin position="1"/>
        <end position="117"/>
    </location>
</feature>
<dbReference type="EMBL" id="AE017244">
    <property type="protein sequence ID" value="AAZ53498.1"/>
    <property type="molecule type" value="Genomic_DNA"/>
</dbReference>
<dbReference type="RefSeq" id="WP_011290024.1">
    <property type="nucleotide sequence ID" value="NC_007332.1"/>
</dbReference>
<dbReference type="SMR" id="Q4A8P1"/>
<dbReference type="KEGG" id="mhp:MHP7448_0123"/>
<dbReference type="HOGENOM" id="CLU_123265_0_1_14"/>
<dbReference type="Proteomes" id="UP000000553">
    <property type="component" value="Chromosome"/>
</dbReference>
<dbReference type="GO" id="GO:1990904">
    <property type="term" value="C:ribonucleoprotein complex"/>
    <property type="evidence" value="ECO:0007669"/>
    <property type="project" value="UniProtKB-KW"/>
</dbReference>
<dbReference type="GO" id="GO:0005840">
    <property type="term" value="C:ribosome"/>
    <property type="evidence" value="ECO:0007669"/>
    <property type="project" value="UniProtKB-KW"/>
</dbReference>
<dbReference type="GO" id="GO:0019843">
    <property type="term" value="F:rRNA binding"/>
    <property type="evidence" value="ECO:0007669"/>
    <property type="project" value="UniProtKB-UniRule"/>
</dbReference>
<dbReference type="GO" id="GO:0003735">
    <property type="term" value="F:structural constituent of ribosome"/>
    <property type="evidence" value="ECO:0007669"/>
    <property type="project" value="InterPro"/>
</dbReference>
<dbReference type="GO" id="GO:0000027">
    <property type="term" value="P:ribosomal large subunit assembly"/>
    <property type="evidence" value="ECO:0007669"/>
    <property type="project" value="UniProtKB-UniRule"/>
</dbReference>
<dbReference type="GO" id="GO:0006412">
    <property type="term" value="P:translation"/>
    <property type="evidence" value="ECO:0007669"/>
    <property type="project" value="InterPro"/>
</dbReference>
<dbReference type="CDD" id="cd07026">
    <property type="entry name" value="Ribosomal_L20"/>
    <property type="match status" value="1"/>
</dbReference>
<dbReference type="FunFam" id="1.10.1900.20:FF:000001">
    <property type="entry name" value="50S ribosomal protein L20"/>
    <property type="match status" value="1"/>
</dbReference>
<dbReference type="Gene3D" id="6.10.160.10">
    <property type="match status" value="1"/>
</dbReference>
<dbReference type="Gene3D" id="1.10.1900.20">
    <property type="entry name" value="Ribosomal protein L20"/>
    <property type="match status" value="1"/>
</dbReference>
<dbReference type="HAMAP" id="MF_00382">
    <property type="entry name" value="Ribosomal_bL20"/>
    <property type="match status" value="1"/>
</dbReference>
<dbReference type="InterPro" id="IPR005813">
    <property type="entry name" value="Ribosomal_bL20"/>
</dbReference>
<dbReference type="InterPro" id="IPR049946">
    <property type="entry name" value="RIBOSOMAL_L20_CS"/>
</dbReference>
<dbReference type="InterPro" id="IPR035566">
    <property type="entry name" value="Ribosomal_protein_bL20_C"/>
</dbReference>
<dbReference type="NCBIfam" id="TIGR01032">
    <property type="entry name" value="rplT_bact"/>
    <property type="match status" value="1"/>
</dbReference>
<dbReference type="PANTHER" id="PTHR10986">
    <property type="entry name" value="39S RIBOSOMAL PROTEIN L20"/>
    <property type="match status" value="1"/>
</dbReference>
<dbReference type="Pfam" id="PF00453">
    <property type="entry name" value="Ribosomal_L20"/>
    <property type="match status" value="1"/>
</dbReference>
<dbReference type="PRINTS" id="PR00062">
    <property type="entry name" value="RIBOSOMALL20"/>
</dbReference>
<dbReference type="SUPFAM" id="SSF74731">
    <property type="entry name" value="Ribosomal protein L20"/>
    <property type="match status" value="1"/>
</dbReference>
<dbReference type="PROSITE" id="PS00937">
    <property type="entry name" value="RIBOSOMAL_L20"/>
    <property type="match status" value="1"/>
</dbReference>
<accession>Q4A8P1</accession>
<evidence type="ECO:0000255" key="1">
    <source>
        <dbReference type="HAMAP-Rule" id="MF_00382"/>
    </source>
</evidence>
<evidence type="ECO:0000305" key="2"/>
<keyword id="KW-0687">Ribonucleoprotein</keyword>
<keyword id="KW-0689">Ribosomal protein</keyword>
<keyword id="KW-0694">RNA-binding</keyword>
<keyword id="KW-0699">rRNA-binding</keyword>
<organism>
    <name type="scientific">Mesomycoplasma hyopneumoniae (strain 7448)</name>
    <name type="common">Mycoplasma hyopneumoniae</name>
    <dbReference type="NCBI Taxonomy" id="262722"/>
    <lineage>
        <taxon>Bacteria</taxon>
        <taxon>Bacillati</taxon>
        <taxon>Mycoplasmatota</taxon>
        <taxon>Mycoplasmoidales</taxon>
        <taxon>Metamycoplasmataceae</taxon>
        <taxon>Mesomycoplasma</taxon>
    </lineage>
</organism>
<reference key="1">
    <citation type="journal article" date="2005" name="J. Bacteriol.">
        <title>Swine and poultry pathogens: the complete genome sequences of two strains of Mycoplasma hyopneumoniae and a strain of Mycoplasma synoviae.</title>
        <authorList>
            <person name="Vasconcelos A.T.R."/>
            <person name="Ferreira H.B."/>
            <person name="Bizarro C.V."/>
            <person name="Bonatto S.L."/>
            <person name="Carvalho M.O."/>
            <person name="Pinto P.M."/>
            <person name="Almeida D.F."/>
            <person name="Almeida L.G.P."/>
            <person name="Almeida R."/>
            <person name="Alves-Junior L."/>
            <person name="Assuncao E.N."/>
            <person name="Azevedo V.A.C."/>
            <person name="Bogo M.R."/>
            <person name="Brigido M.M."/>
            <person name="Brocchi M."/>
            <person name="Burity H.A."/>
            <person name="Camargo A.A."/>
            <person name="Camargo S.S."/>
            <person name="Carepo M.S."/>
            <person name="Carraro D.M."/>
            <person name="de Mattos Cascardo J.C."/>
            <person name="Castro L.A."/>
            <person name="Cavalcanti G."/>
            <person name="Chemale G."/>
            <person name="Collevatti R.G."/>
            <person name="Cunha C.W."/>
            <person name="Dallagiovanna B."/>
            <person name="Dambros B.P."/>
            <person name="Dellagostin O.A."/>
            <person name="Falcao C."/>
            <person name="Fantinatti-Garboggini F."/>
            <person name="Felipe M.S.S."/>
            <person name="Fiorentin L."/>
            <person name="Franco G.R."/>
            <person name="Freitas N.S.A."/>
            <person name="Frias D."/>
            <person name="Grangeiro T.B."/>
            <person name="Grisard E.C."/>
            <person name="Guimaraes C.T."/>
            <person name="Hungria M."/>
            <person name="Jardim S.N."/>
            <person name="Krieger M.A."/>
            <person name="Laurino J.P."/>
            <person name="Lima L.F.A."/>
            <person name="Lopes M.I."/>
            <person name="Loreto E.L.S."/>
            <person name="Madeira H.M.F."/>
            <person name="Manfio G.P."/>
            <person name="Maranhao A.Q."/>
            <person name="Martinkovics C.T."/>
            <person name="Medeiros S.R.B."/>
            <person name="Moreira M.A.M."/>
            <person name="Neiva M."/>
            <person name="Ramalho-Neto C.E."/>
            <person name="Nicolas M.F."/>
            <person name="Oliveira S.C."/>
            <person name="Paixao R.F.C."/>
            <person name="Pedrosa F.O."/>
            <person name="Pena S.D.J."/>
            <person name="Pereira M."/>
            <person name="Pereira-Ferrari L."/>
            <person name="Piffer I."/>
            <person name="Pinto L.S."/>
            <person name="Potrich D.P."/>
            <person name="Salim A.C.M."/>
            <person name="Santos F.R."/>
            <person name="Schmitt R."/>
            <person name="Schneider M.P.C."/>
            <person name="Schrank A."/>
            <person name="Schrank I.S."/>
            <person name="Schuck A.F."/>
            <person name="Seuanez H.N."/>
            <person name="Silva D.W."/>
            <person name="Silva R."/>
            <person name="Silva S.C."/>
            <person name="Soares C.M.A."/>
            <person name="Souza K.R.L."/>
            <person name="Souza R.C."/>
            <person name="Staats C.C."/>
            <person name="Steffens M.B.R."/>
            <person name="Teixeira S.M.R."/>
            <person name="Urmenyi T.P."/>
            <person name="Vainstein M.H."/>
            <person name="Zuccherato L.W."/>
            <person name="Simpson A.J.G."/>
            <person name="Zaha A."/>
        </authorList>
    </citation>
    <scope>NUCLEOTIDE SEQUENCE [LARGE SCALE GENOMIC DNA]</scope>
    <source>
        <strain>7448</strain>
    </source>
</reference>
<protein>
    <recommendedName>
        <fullName evidence="1">Large ribosomal subunit protein bL20</fullName>
    </recommendedName>
    <alternativeName>
        <fullName evidence="2">50S ribosomal protein L20</fullName>
    </alternativeName>
</protein>
<sequence length="117" mass="13838">MRVKGGSITRQRRRRWLKLAKGYWGHKSIGFKTAKQAVVKSWTYAFRDRKQRKRDFRKLWISRINAAARNQGISYSQLMYKIKQSNIEINRKMLAEMAVHHQSDFENIVKLAIAKSA</sequence>
<gene>
    <name evidence="1" type="primary">rplT</name>
    <name type="ordered locus">MHP7448_0123</name>
</gene>